<protein>
    <recommendedName>
        <fullName evidence="1">DNA-directed RNA polymerase subunit omega</fullName>
        <shortName evidence="1">RNAP omega subunit</shortName>
        <ecNumber evidence="1">2.7.7.6</ecNumber>
    </recommendedName>
    <alternativeName>
        <fullName evidence="1">RNA polymerase omega subunit</fullName>
    </alternativeName>
    <alternativeName>
        <fullName evidence="1">Transcriptase subunit omega</fullName>
    </alternativeName>
</protein>
<dbReference type="EC" id="2.7.7.6" evidence="1"/>
<dbReference type="EMBL" id="CP000699">
    <property type="protein sequence ID" value="ABQ69874.1"/>
    <property type="molecule type" value="Genomic_DNA"/>
</dbReference>
<dbReference type="SMR" id="A5VC58"/>
<dbReference type="STRING" id="392499.Swit_3528"/>
<dbReference type="PaxDb" id="392499-Swit_3528"/>
<dbReference type="KEGG" id="swi:Swit_3528"/>
<dbReference type="eggNOG" id="COG1758">
    <property type="taxonomic scope" value="Bacteria"/>
</dbReference>
<dbReference type="HOGENOM" id="CLU_125406_2_0_5"/>
<dbReference type="OrthoDB" id="9796300at2"/>
<dbReference type="Proteomes" id="UP000001989">
    <property type="component" value="Chromosome"/>
</dbReference>
<dbReference type="GO" id="GO:0000428">
    <property type="term" value="C:DNA-directed RNA polymerase complex"/>
    <property type="evidence" value="ECO:0007669"/>
    <property type="project" value="UniProtKB-KW"/>
</dbReference>
<dbReference type="GO" id="GO:0003677">
    <property type="term" value="F:DNA binding"/>
    <property type="evidence" value="ECO:0007669"/>
    <property type="project" value="UniProtKB-UniRule"/>
</dbReference>
<dbReference type="GO" id="GO:0003899">
    <property type="term" value="F:DNA-directed RNA polymerase activity"/>
    <property type="evidence" value="ECO:0007669"/>
    <property type="project" value="UniProtKB-UniRule"/>
</dbReference>
<dbReference type="GO" id="GO:0006351">
    <property type="term" value="P:DNA-templated transcription"/>
    <property type="evidence" value="ECO:0007669"/>
    <property type="project" value="UniProtKB-UniRule"/>
</dbReference>
<dbReference type="Gene3D" id="3.90.940.10">
    <property type="match status" value="1"/>
</dbReference>
<dbReference type="HAMAP" id="MF_00366">
    <property type="entry name" value="RNApol_bact_RpoZ"/>
    <property type="match status" value="1"/>
</dbReference>
<dbReference type="InterPro" id="IPR003716">
    <property type="entry name" value="DNA-dir_RNA_pol_omega"/>
</dbReference>
<dbReference type="InterPro" id="IPR006110">
    <property type="entry name" value="Pol_omega/Rpo6/RPB6"/>
</dbReference>
<dbReference type="InterPro" id="IPR036161">
    <property type="entry name" value="RPB6/omega-like_sf"/>
</dbReference>
<dbReference type="NCBIfam" id="TIGR00690">
    <property type="entry name" value="rpoZ"/>
    <property type="match status" value="1"/>
</dbReference>
<dbReference type="PANTHER" id="PTHR34476">
    <property type="entry name" value="DNA-DIRECTED RNA POLYMERASE SUBUNIT OMEGA"/>
    <property type="match status" value="1"/>
</dbReference>
<dbReference type="PANTHER" id="PTHR34476:SF1">
    <property type="entry name" value="DNA-DIRECTED RNA POLYMERASE SUBUNIT OMEGA"/>
    <property type="match status" value="1"/>
</dbReference>
<dbReference type="Pfam" id="PF01192">
    <property type="entry name" value="RNA_pol_Rpb6"/>
    <property type="match status" value="1"/>
</dbReference>
<dbReference type="SMART" id="SM01409">
    <property type="entry name" value="RNA_pol_Rpb6"/>
    <property type="match status" value="1"/>
</dbReference>
<dbReference type="SUPFAM" id="SSF63562">
    <property type="entry name" value="RPB6/omega subunit-like"/>
    <property type="match status" value="1"/>
</dbReference>
<keyword id="KW-0240">DNA-directed RNA polymerase</keyword>
<keyword id="KW-0548">Nucleotidyltransferase</keyword>
<keyword id="KW-1185">Reference proteome</keyword>
<keyword id="KW-0804">Transcription</keyword>
<keyword id="KW-0808">Transferase</keyword>
<organism>
    <name type="scientific">Rhizorhabdus wittichii (strain DSM 6014 / CCUG 31198 / JCM 15750 / NBRC 105917 / EY 4224 / RW1)</name>
    <name type="common">Sphingomonas wittichii</name>
    <dbReference type="NCBI Taxonomy" id="392499"/>
    <lineage>
        <taxon>Bacteria</taxon>
        <taxon>Pseudomonadati</taxon>
        <taxon>Pseudomonadota</taxon>
        <taxon>Alphaproteobacteria</taxon>
        <taxon>Sphingomonadales</taxon>
        <taxon>Sphingomonadaceae</taxon>
        <taxon>Rhizorhabdus</taxon>
    </lineage>
</organism>
<name>RPOZ_RHIWR</name>
<reference key="1">
    <citation type="journal article" date="2010" name="J. Bacteriol.">
        <title>Genome sequence of the dioxin-mineralizing bacterium Sphingomonas wittichii RW1.</title>
        <authorList>
            <person name="Miller T.R."/>
            <person name="Delcher A.L."/>
            <person name="Salzberg S.L."/>
            <person name="Saunders E."/>
            <person name="Detter J.C."/>
            <person name="Halden R.U."/>
        </authorList>
    </citation>
    <scope>NUCLEOTIDE SEQUENCE [LARGE SCALE GENOMIC DNA]</scope>
    <source>
        <strain>DSM 6014 / CCUG 31198 / JCM 15750 / NBRC 105917 / EY 4224 / RW1</strain>
    </source>
</reference>
<comment type="function">
    <text evidence="1">Promotes RNA polymerase assembly. Latches the N- and C-terminal regions of the beta' subunit thereby facilitating its interaction with the beta and alpha subunits.</text>
</comment>
<comment type="catalytic activity">
    <reaction evidence="1">
        <text>RNA(n) + a ribonucleoside 5'-triphosphate = RNA(n+1) + diphosphate</text>
        <dbReference type="Rhea" id="RHEA:21248"/>
        <dbReference type="Rhea" id="RHEA-COMP:14527"/>
        <dbReference type="Rhea" id="RHEA-COMP:17342"/>
        <dbReference type="ChEBI" id="CHEBI:33019"/>
        <dbReference type="ChEBI" id="CHEBI:61557"/>
        <dbReference type="ChEBI" id="CHEBI:140395"/>
        <dbReference type="EC" id="2.7.7.6"/>
    </reaction>
</comment>
<comment type="subunit">
    <text evidence="1">The RNAP catalytic core consists of 2 alpha, 1 beta, 1 beta' and 1 omega subunit. When a sigma factor is associated with the core the holoenzyme is formed, which can initiate transcription.</text>
</comment>
<comment type="similarity">
    <text evidence="1">Belongs to the RNA polymerase subunit omega family.</text>
</comment>
<sequence length="113" mass="12313">MARVTVEDCVDKISNRFDLVLMAAQRARQISGGAELTIDRDRDKNPVVALREIAEQTVTPEELHEAVVSTLQRVRVDDDDAPDEIGSLAASAEALRLTAAAPPRNQNIGGDYE</sequence>
<accession>A5VC58</accession>
<feature type="chain" id="PRO_1000006021" description="DNA-directed RNA polymerase subunit omega">
    <location>
        <begin position="1"/>
        <end position="113"/>
    </location>
</feature>
<proteinExistence type="inferred from homology"/>
<gene>
    <name evidence="1" type="primary">rpoZ</name>
    <name type="ordered locus">Swit_3528</name>
</gene>
<evidence type="ECO:0000255" key="1">
    <source>
        <dbReference type="HAMAP-Rule" id="MF_00366"/>
    </source>
</evidence>